<proteinExistence type="predicted"/>
<feature type="chain" id="PRO_0000221925" description="Uncharacterized protein C-168">
    <location>
        <begin position="1"/>
        <end position="168"/>
    </location>
</feature>
<feature type="region of interest" description="Disordered" evidence="1">
    <location>
        <begin position="1"/>
        <end position="81"/>
    </location>
</feature>
<feature type="region of interest" description="Disordered" evidence="1">
    <location>
        <begin position="119"/>
        <end position="150"/>
    </location>
</feature>
<feature type="compositionally biased region" description="Low complexity" evidence="1">
    <location>
        <begin position="7"/>
        <end position="34"/>
    </location>
</feature>
<feature type="compositionally biased region" description="Basic residues" evidence="1">
    <location>
        <begin position="43"/>
        <end position="67"/>
    </location>
</feature>
<feature type="compositionally biased region" description="Polar residues" evidence="1">
    <location>
        <begin position="123"/>
        <end position="146"/>
    </location>
</feature>
<reference key="1">
    <citation type="journal article" date="1982" name="J. Biol. Chem.">
        <title>Nucleotide sequences from the adenovirus-2 genome.</title>
        <authorList>
            <person name="Gingeras T.R."/>
            <person name="Sciaky D."/>
            <person name="Gelinas R.E."/>
            <person name="Bing-Dong J."/>
            <person name="Yen C.E."/>
            <person name="Kelly M.M."/>
            <person name="Bullock P.A."/>
            <person name="Parsons B.L."/>
            <person name="O'Neill K.E."/>
            <person name="Roberts R.J."/>
        </authorList>
    </citation>
    <scope>NUCLEOTIDE SEQUENCE [GENOMIC DNA]</scope>
</reference>
<reference key="2">
    <citation type="journal article" date="1982" name="J. Biol. Chem.">
        <title>DNA sequence analysis of the region encoding the terminal protein and the hypothetical N-gene product of adenovirus type 2.</title>
        <authorList>
            <person name="Alestroem P."/>
            <person name="Akusjaervi G."/>
            <person name="Pettersson M."/>
            <person name="Pettersson U."/>
        </authorList>
    </citation>
    <scope>NUCLEOTIDE SEQUENCE [GENOMIC DNA]</scope>
</reference>
<sequence length="168" mass="17703">MSSATVSRTSRSKATGASSSSISSSIRASPSSSSSGGGGGGGTRRRRRRTGRRSTKRSIISPRRRRMVSVTARPFSRGRSWKTPPVMSRLWVGGGLPCGRDTALTMHLNNCCVGTPPPRDLSESASTGSENLSRKASNQSQSQGRLSTVAGGSGWRSGLFLAEVLLMM</sequence>
<protein>
    <recommendedName>
        <fullName>Uncharacterized protein C-168</fullName>
    </recommendedName>
</protein>
<dbReference type="EMBL" id="J01917">
    <property type="status" value="NOT_ANNOTATED_CDS"/>
    <property type="molecule type" value="Genomic_DNA"/>
</dbReference>
<dbReference type="PIR" id="F92351">
    <property type="entry name" value="A03864"/>
</dbReference>
<dbReference type="Proteomes" id="UP000008167">
    <property type="component" value="Segment"/>
</dbReference>
<organism>
    <name type="scientific">Human adenovirus C serotype 2</name>
    <name type="common">HAdV-2</name>
    <name type="synonym">Human adenovirus 2</name>
    <dbReference type="NCBI Taxonomy" id="10515"/>
    <lineage>
        <taxon>Viruses</taxon>
        <taxon>Varidnaviria</taxon>
        <taxon>Bamfordvirae</taxon>
        <taxon>Preplasmiviricota</taxon>
        <taxon>Tectiliviricetes</taxon>
        <taxon>Rowavirales</taxon>
        <taxon>Adenoviridae</taxon>
        <taxon>Mastadenovirus</taxon>
        <taxon>Human mastadenovirus C</taxon>
    </lineage>
</organism>
<evidence type="ECO:0000256" key="1">
    <source>
        <dbReference type="SAM" id="MobiDB-lite"/>
    </source>
</evidence>
<keyword id="KW-1185">Reference proteome</keyword>
<name>Y168_ADE02</name>
<accession>P03292</accession>
<organismHost>
    <name type="scientific">Homo sapiens</name>
    <name type="common">Human</name>
    <dbReference type="NCBI Taxonomy" id="9606"/>
</organismHost>